<name>RS3_CORDI</name>
<reference key="1">
    <citation type="journal article" date="2003" name="Nucleic Acids Res.">
        <title>The complete genome sequence and analysis of Corynebacterium diphtheriae NCTC13129.</title>
        <authorList>
            <person name="Cerdeno-Tarraga A.-M."/>
            <person name="Efstratiou A."/>
            <person name="Dover L.G."/>
            <person name="Holden M.T.G."/>
            <person name="Pallen M.J."/>
            <person name="Bentley S.D."/>
            <person name="Besra G.S."/>
            <person name="Churcher C.M."/>
            <person name="James K.D."/>
            <person name="De Zoysa A."/>
            <person name="Chillingworth T."/>
            <person name="Cronin A."/>
            <person name="Dowd L."/>
            <person name="Feltwell T."/>
            <person name="Hamlin N."/>
            <person name="Holroyd S."/>
            <person name="Jagels K."/>
            <person name="Moule S."/>
            <person name="Quail M.A."/>
            <person name="Rabbinowitsch E."/>
            <person name="Rutherford K.M."/>
            <person name="Thomson N.R."/>
            <person name="Unwin L."/>
            <person name="Whitehead S."/>
            <person name="Barrell B.G."/>
            <person name="Parkhill J."/>
        </authorList>
    </citation>
    <scope>NUCLEOTIDE SEQUENCE [LARGE SCALE GENOMIC DNA]</scope>
    <source>
        <strain>ATCC 700971 / NCTC 13129 / Biotype gravis</strain>
    </source>
</reference>
<feature type="chain" id="PRO_0000130106" description="Small ribosomal subunit protein uS3">
    <location>
        <begin position="1"/>
        <end position="248"/>
    </location>
</feature>
<feature type="domain" description="KH type-2" evidence="1">
    <location>
        <begin position="38"/>
        <end position="106"/>
    </location>
</feature>
<feature type="region of interest" description="Disordered" evidence="2">
    <location>
        <begin position="213"/>
        <end position="248"/>
    </location>
</feature>
<feature type="compositionally biased region" description="Basic and acidic residues" evidence="2">
    <location>
        <begin position="213"/>
        <end position="230"/>
    </location>
</feature>
<keyword id="KW-1185">Reference proteome</keyword>
<keyword id="KW-0687">Ribonucleoprotein</keyword>
<keyword id="KW-0689">Ribosomal protein</keyword>
<keyword id="KW-0694">RNA-binding</keyword>
<keyword id="KW-0699">rRNA-binding</keyword>
<dbReference type="EMBL" id="BX248355">
    <property type="protein sequence ID" value="CAE48985.1"/>
    <property type="molecule type" value="Genomic_DNA"/>
</dbReference>
<dbReference type="RefSeq" id="WP_004566730.1">
    <property type="nucleotide sequence ID" value="NC_002935.2"/>
</dbReference>
<dbReference type="SMR" id="Q6NJC9"/>
<dbReference type="STRING" id="257309.DIP0479"/>
<dbReference type="GeneID" id="29422118"/>
<dbReference type="KEGG" id="cdi:DIP0479"/>
<dbReference type="HOGENOM" id="CLU_058591_0_0_11"/>
<dbReference type="Proteomes" id="UP000002198">
    <property type="component" value="Chromosome"/>
</dbReference>
<dbReference type="GO" id="GO:0022627">
    <property type="term" value="C:cytosolic small ribosomal subunit"/>
    <property type="evidence" value="ECO:0007669"/>
    <property type="project" value="TreeGrafter"/>
</dbReference>
<dbReference type="GO" id="GO:0003729">
    <property type="term" value="F:mRNA binding"/>
    <property type="evidence" value="ECO:0007669"/>
    <property type="project" value="UniProtKB-UniRule"/>
</dbReference>
<dbReference type="GO" id="GO:0019843">
    <property type="term" value="F:rRNA binding"/>
    <property type="evidence" value="ECO:0007669"/>
    <property type="project" value="UniProtKB-UniRule"/>
</dbReference>
<dbReference type="GO" id="GO:0003735">
    <property type="term" value="F:structural constituent of ribosome"/>
    <property type="evidence" value="ECO:0007669"/>
    <property type="project" value="InterPro"/>
</dbReference>
<dbReference type="GO" id="GO:0006412">
    <property type="term" value="P:translation"/>
    <property type="evidence" value="ECO:0007669"/>
    <property type="project" value="UniProtKB-UniRule"/>
</dbReference>
<dbReference type="CDD" id="cd02412">
    <property type="entry name" value="KH-II_30S_S3"/>
    <property type="match status" value="1"/>
</dbReference>
<dbReference type="FunFam" id="3.30.1140.32:FF:000002">
    <property type="entry name" value="30S ribosomal protein S3"/>
    <property type="match status" value="1"/>
</dbReference>
<dbReference type="FunFam" id="3.30.300.20:FF:000001">
    <property type="entry name" value="30S ribosomal protein S3"/>
    <property type="match status" value="1"/>
</dbReference>
<dbReference type="Gene3D" id="3.30.300.20">
    <property type="match status" value="1"/>
</dbReference>
<dbReference type="Gene3D" id="3.30.1140.32">
    <property type="entry name" value="Ribosomal protein S3, C-terminal domain"/>
    <property type="match status" value="1"/>
</dbReference>
<dbReference type="HAMAP" id="MF_01309_B">
    <property type="entry name" value="Ribosomal_uS3_B"/>
    <property type="match status" value="1"/>
</dbReference>
<dbReference type="InterPro" id="IPR004087">
    <property type="entry name" value="KH_dom"/>
</dbReference>
<dbReference type="InterPro" id="IPR015946">
    <property type="entry name" value="KH_dom-like_a/b"/>
</dbReference>
<dbReference type="InterPro" id="IPR004044">
    <property type="entry name" value="KH_dom_type_2"/>
</dbReference>
<dbReference type="InterPro" id="IPR009019">
    <property type="entry name" value="KH_sf_prok-type"/>
</dbReference>
<dbReference type="InterPro" id="IPR036419">
    <property type="entry name" value="Ribosomal_S3_C_sf"/>
</dbReference>
<dbReference type="InterPro" id="IPR005704">
    <property type="entry name" value="Ribosomal_uS3_bac-typ"/>
</dbReference>
<dbReference type="InterPro" id="IPR001351">
    <property type="entry name" value="Ribosomal_uS3_C"/>
</dbReference>
<dbReference type="InterPro" id="IPR018280">
    <property type="entry name" value="Ribosomal_uS3_CS"/>
</dbReference>
<dbReference type="NCBIfam" id="TIGR01009">
    <property type="entry name" value="rpsC_bact"/>
    <property type="match status" value="1"/>
</dbReference>
<dbReference type="PANTHER" id="PTHR11760">
    <property type="entry name" value="30S/40S RIBOSOMAL PROTEIN S3"/>
    <property type="match status" value="1"/>
</dbReference>
<dbReference type="PANTHER" id="PTHR11760:SF19">
    <property type="entry name" value="SMALL RIBOSOMAL SUBUNIT PROTEIN US3C"/>
    <property type="match status" value="1"/>
</dbReference>
<dbReference type="Pfam" id="PF07650">
    <property type="entry name" value="KH_2"/>
    <property type="match status" value="1"/>
</dbReference>
<dbReference type="Pfam" id="PF00189">
    <property type="entry name" value="Ribosomal_S3_C"/>
    <property type="match status" value="1"/>
</dbReference>
<dbReference type="SMART" id="SM00322">
    <property type="entry name" value="KH"/>
    <property type="match status" value="1"/>
</dbReference>
<dbReference type="SUPFAM" id="SSF54814">
    <property type="entry name" value="Prokaryotic type KH domain (KH-domain type II)"/>
    <property type="match status" value="1"/>
</dbReference>
<dbReference type="SUPFAM" id="SSF54821">
    <property type="entry name" value="Ribosomal protein S3 C-terminal domain"/>
    <property type="match status" value="1"/>
</dbReference>
<dbReference type="PROSITE" id="PS50823">
    <property type="entry name" value="KH_TYPE_2"/>
    <property type="match status" value="1"/>
</dbReference>
<dbReference type="PROSITE" id="PS00548">
    <property type="entry name" value="RIBOSOMAL_S3"/>
    <property type="match status" value="1"/>
</dbReference>
<protein>
    <recommendedName>
        <fullName evidence="1">Small ribosomal subunit protein uS3</fullName>
    </recommendedName>
    <alternativeName>
        <fullName evidence="3">30S ribosomal protein S3</fullName>
    </alternativeName>
</protein>
<sequence>MGQKIHPHGLRLGITSDWKSHWYADKNYAEYLAEDIRVREYLVKTLDRAGIADVVIERTRERVRVDIHTARPGIVIGRRGSEADRLRTSLEKLTGKQVALNILEVKNIDANAQLVAQSIAEQLTNRVAFRRAMRKAIQGAMRQPQVKGIKVVCSGRLGGAEMSRTERYHEGRVPLHTLRAEIDYGTYEAHTTFGRIGVKVWIYKGDVVGGRRESEINAPAERRGRGDRNGRPRRGGQRRQRSEQKQEG</sequence>
<proteinExistence type="inferred from homology"/>
<comment type="function">
    <text evidence="1">Binds the lower part of the 30S subunit head. Binds mRNA in the 70S ribosome, positioning it for translation.</text>
</comment>
<comment type="subunit">
    <text evidence="1">Part of the 30S ribosomal subunit. Forms a tight complex with proteins S10 and S14.</text>
</comment>
<comment type="similarity">
    <text evidence="1">Belongs to the universal ribosomal protein uS3 family.</text>
</comment>
<organism>
    <name type="scientific">Corynebacterium diphtheriae (strain ATCC 700971 / NCTC 13129 / Biotype gravis)</name>
    <dbReference type="NCBI Taxonomy" id="257309"/>
    <lineage>
        <taxon>Bacteria</taxon>
        <taxon>Bacillati</taxon>
        <taxon>Actinomycetota</taxon>
        <taxon>Actinomycetes</taxon>
        <taxon>Mycobacteriales</taxon>
        <taxon>Corynebacteriaceae</taxon>
        <taxon>Corynebacterium</taxon>
    </lineage>
</organism>
<evidence type="ECO:0000255" key="1">
    <source>
        <dbReference type="HAMAP-Rule" id="MF_01309"/>
    </source>
</evidence>
<evidence type="ECO:0000256" key="2">
    <source>
        <dbReference type="SAM" id="MobiDB-lite"/>
    </source>
</evidence>
<evidence type="ECO:0000305" key="3"/>
<accession>Q6NJC9</accession>
<gene>
    <name evidence="1" type="primary">rpsC</name>
    <name type="ordered locus">DIP0479</name>
</gene>